<sequence length="80" mass="9301">MPEQREKKKKDESDSVRAEGVVEEALPNTTFRVKLDTGHDILAYISGKMRIHYIRILPGDRVVLEISPYDTSRGRIVYRR</sequence>
<evidence type="ECO:0000255" key="1">
    <source>
        <dbReference type="HAMAP-Rule" id="MF_00075"/>
    </source>
</evidence>
<evidence type="ECO:0000305" key="2"/>
<feature type="chain" id="PRO_0000095781" description="Translation initiation factor IF-1">
    <location>
        <begin position="1"/>
        <end position="80"/>
    </location>
</feature>
<feature type="domain" description="S1-like" evidence="1">
    <location>
        <begin position="6"/>
        <end position="80"/>
    </location>
</feature>
<dbReference type="EMBL" id="AE000513">
    <property type="protein sequence ID" value="AAF11673.1"/>
    <property type="status" value="ALT_INIT"/>
    <property type="molecule type" value="Genomic_DNA"/>
</dbReference>
<dbReference type="PIR" id="D75312">
    <property type="entry name" value="D75312"/>
</dbReference>
<dbReference type="RefSeq" id="NP_295846.1">
    <property type="nucleotide sequence ID" value="NC_001263.1"/>
</dbReference>
<dbReference type="RefSeq" id="WP_027479941.1">
    <property type="nucleotide sequence ID" value="NC_001263.1"/>
</dbReference>
<dbReference type="SMR" id="Q9RSK1"/>
<dbReference type="FunCoup" id="Q9RSK1">
    <property type="interactions" value="301"/>
</dbReference>
<dbReference type="STRING" id="243230.DR_2123"/>
<dbReference type="PaxDb" id="243230-DR_2123"/>
<dbReference type="EnsemblBacteria" id="AAF11673">
    <property type="protein sequence ID" value="AAF11673"/>
    <property type="gene ID" value="DR_2123"/>
</dbReference>
<dbReference type="GeneID" id="69518365"/>
<dbReference type="KEGG" id="dra:DR_2123"/>
<dbReference type="PATRIC" id="fig|243230.17.peg.2346"/>
<dbReference type="eggNOG" id="COG0361">
    <property type="taxonomic scope" value="Bacteria"/>
</dbReference>
<dbReference type="HOGENOM" id="CLU_151267_0_2_0"/>
<dbReference type="InParanoid" id="Q9RSK1"/>
<dbReference type="OrthoDB" id="9803250at2"/>
<dbReference type="Proteomes" id="UP000002524">
    <property type="component" value="Chromosome 1"/>
</dbReference>
<dbReference type="GO" id="GO:0005829">
    <property type="term" value="C:cytosol"/>
    <property type="evidence" value="ECO:0000318"/>
    <property type="project" value="GO_Central"/>
</dbReference>
<dbReference type="GO" id="GO:0043022">
    <property type="term" value="F:ribosome binding"/>
    <property type="evidence" value="ECO:0000318"/>
    <property type="project" value="GO_Central"/>
</dbReference>
<dbReference type="GO" id="GO:0019843">
    <property type="term" value="F:rRNA binding"/>
    <property type="evidence" value="ECO:0007669"/>
    <property type="project" value="UniProtKB-UniRule"/>
</dbReference>
<dbReference type="GO" id="GO:0003743">
    <property type="term" value="F:translation initiation factor activity"/>
    <property type="evidence" value="ECO:0007669"/>
    <property type="project" value="UniProtKB-UniRule"/>
</dbReference>
<dbReference type="CDD" id="cd04451">
    <property type="entry name" value="S1_IF1"/>
    <property type="match status" value="1"/>
</dbReference>
<dbReference type="FunFam" id="2.40.50.140:FF:000002">
    <property type="entry name" value="Translation initiation factor IF-1"/>
    <property type="match status" value="1"/>
</dbReference>
<dbReference type="Gene3D" id="2.40.50.140">
    <property type="entry name" value="Nucleic acid-binding proteins"/>
    <property type="match status" value="1"/>
</dbReference>
<dbReference type="HAMAP" id="MF_00075">
    <property type="entry name" value="IF_1"/>
    <property type="match status" value="1"/>
</dbReference>
<dbReference type="InterPro" id="IPR012340">
    <property type="entry name" value="NA-bd_OB-fold"/>
</dbReference>
<dbReference type="InterPro" id="IPR006196">
    <property type="entry name" value="RNA-binding_domain_S1_IF1"/>
</dbReference>
<dbReference type="InterPro" id="IPR004368">
    <property type="entry name" value="TIF_IF1"/>
</dbReference>
<dbReference type="NCBIfam" id="TIGR00008">
    <property type="entry name" value="infA"/>
    <property type="match status" value="1"/>
</dbReference>
<dbReference type="PANTHER" id="PTHR33370">
    <property type="entry name" value="TRANSLATION INITIATION FACTOR IF-1, CHLOROPLASTIC"/>
    <property type="match status" value="1"/>
</dbReference>
<dbReference type="PANTHER" id="PTHR33370:SF1">
    <property type="entry name" value="TRANSLATION INITIATION FACTOR IF-1, CHLOROPLASTIC"/>
    <property type="match status" value="1"/>
</dbReference>
<dbReference type="Pfam" id="PF01176">
    <property type="entry name" value="eIF-1a"/>
    <property type="match status" value="1"/>
</dbReference>
<dbReference type="SUPFAM" id="SSF50249">
    <property type="entry name" value="Nucleic acid-binding proteins"/>
    <property type="match status" value="1"/>
</dbReference>
<dbReference type="PROSITE" id="PS50832">
    <property type="entry name" value="S1_IF1_TYPE"/>
    <property type="match status" value="1"/>
</dbReference>
<keyword id="KW-0963">Cytoplasm</keyword>
<keyword id="KW-0396">Initiation factor</keyword>
<keyword id="KW-0648">Protein biosynthesis</keyword>
<keyword id="KW-1185">Reference proteome</keyword>
<keyword id="KW-0694">RNA-binding</keyword>
<keyword id="KW-0699">rRNA-binding</keyword>
<comment type="function">
    <text evidence="1">One of the essential components for the initiation of protein synthesis. Stabilizes the binding of IF-2 and IF-3 on the 30S subunit to which N-formylmethionyl-tRNA(fMet) subsequently binds. Helps modulate mRNA selection, yielding the 30S pre-initiation complex (PIC). Upon addition of the 50S ribosomal subunit IF-1, IF-2 and IF-3 are released leaving the mature 70S translation initiation complex.</text>
</comment>
<comment type="subunit">
    <text evidence="1">Component of the 30S ribosomal translation pre-initiation complex which assembles on the 30S ribosome in the order IF-2 and IF-3, IF-1 and N-formylmethionyl-tRNA(fMet); mRNA recruitment can occur at any time during PIC assembly.</text>
</comment>
<comment type="subcellular location">
    <subcellularLocation>
        <location evidence="1">Cytoplasm</location>
    </subcellularLocation>
</comment>
<comment type="similarity">
    <text evidence="1">Belongs to the IF-1 family.</text>
</comment>
<comment type="sequence caution" evidence="2">
    <conflict type="erroneous initiation">
        <sequence resource="EMBL-CDS" id="AAF11673"/>
    </conflict>
    <text>Extended N-terminus.</text>
</comment>
<proteinExistence type="inferred from homology"/>
<gene>
    <name evidence="1" type="primary">infA</name>
    <name type="ordered locus">DR_2123</name>
</gene>
<name>IF1_DEIRA</name>
<protein>
    <recommendedName>
        <fullName evidence="1">Translation initiation factor IF-1</fullName>
    </recommendedName>
</protein>
<accession>Q9RSK1</accession>
<organism>
    <name type="scientific">Deinococcus radiodurans (strain ATCC 13939 / DSM 20539 / JCM 16871 / CCUG 27074 / LMG 4051 / NBRC 15346 / NCIMB 9279 / VKM B-1422 / R1)</name>
    <dbReference type="NCBI Taxonomy" id="243230"/>
    <lineage>
        <taxon>Bacteria</taxon>
        <taxon>Thermotogati</taxon>
        <taxon>Deinococcota</taxon>
        <taxon>Deinococci</taxon>
        <taxon>Deinococcales</taxon>
        <taxon>Deinococcaceae</taxon>
        <taxon>Deinococcus</taxon>
    </lineage>
</organism>
<reference key="1">
    <citation type="journal article" date="1999" name="Science">
        <title>Genome sequence of the radioresistant bacterium Deinococcus radiodurans R1.</title>
        <authorList>
            <person name="White O."/>
            <person name="Eisen J.A."/>
            <person name="Heidelberg J.F."/>
            <person name="Hickey E.K."/>
            <person name="Peterson J.D."/>
            <person name="Dodson R.J."/>
            <person name="Haft D.H."/>
            <person name="Gwinn M.L."/>
            <person name="Nelson W.C."/>
            <person name="Richardson D.L."/>
            <person name="Moffat K.S."/>
            <person name="Qin H."/>
            <person name="Jiang L."/>
            <person name="Pamphile W."/>
            <person name="Crosby M."/>
            <person name="Shen M."/>
            <person name="Vamathevan J.J."/>
            <person name="Lam P."/>
            <person name="McDonald L.A."/>
            <person name="Utterback T.R."/>
            <person name="Zalewski C."/>
            <person name="Makarova K.S."/>
            <person name="Aravind L."/>
            <person name="Daly M.J."/>
            <person name="Minton K.W."/>
            <person name="Fleischmann R.D."/>
            <person name="Ketchum K.A."/>
            <person name="Nelson K.E."/>
            <person name="Salzberg S.L."/>
            <person name="Smith H.O."/>
            <person name="Venter J.C."/>
            <person name="Fraser C.M."/>
        </authorList>
    </citation>
    <scope>NUCLEOTIDE SEQUENCE [LARGE SCALE GENOMIC DNA]</scope>
    <source>
        <strain>ATCC 13939 / DSM 20539 / JCM 16871 / CCUG 27074 / LMG 4051 / NBRC 15346 / NCIMB 9279 / VKM B-1422 / R1</strain>
    </source>
</reference>